<proteinExistence type="evidence at protein level"/>
<sequence length="500" mass="57145">MPLMDVHWLIYVAFGAWLCSYVIHVLSSSSTVKVPVVGYRSVFEPTWLLRLRFVWEGGSIIGQGYNKFKDSIFQVRKLGTDIVIIPPNYIDEVRKLSQDKTRSVEPFINDFAGQYTRGMVFLQSDLQNRVIQQRLTPKLVSLTKVMKEELDYALTKEMPDMKNDEWVEVDISSIMVRLISRISARVFLGPEHCRNQEWLTTTAEYSESLFITGFILRVVPHILRPFIAPLLPSYRTLLRNVSSGRRVIGDIIRSQQGDGNEDILSWMRDAATGEEKQIDNIAQRMLILSLASIHTTAMTMTHAMYDLCACPEYIEPLRDEVKSVVGASGWDKTALNRFHKLDSFLKESQRFNPVFLLTFNRIYHQSMTLSDGTNIPSGTRIAVPSHAMLQDSAHVPGPTPPTEFDGFRYSKIRSDSNYAQKYLFSMTDSSNMAFGYGKYACPGRFYASNEMKLTLAILLLQFEFKLPDGKGRPRNITIDSDMIPDPRARLCVRKRSLRDE</sequence>
<keyword id="KW-0325">Glycoprotein</keyword>
<keyword id="KW-0349">Heme</keyword>
<keyword id="KW-0408">Iron</keyword>
<keyword id="KW-0472">Membrane</keyword>
<keyword id="KW-0479">Metal-binding</keyword>
<keyword id="KW-0503">Monooxygenase</keyword>
<keyword id="KW-0521">NADP</keyword>
<keyword id="KW-0560">Oxidoreductase</keyword>
<keyword id="KW-1185">Reference proteome</keyword>
<keyword id="KW-0812">Transmembrane</keyword>
<keyword id="KW-1133">Transmembrane helix</keyword>
<feature type="chain" id="PRO_0000442041" description="Ent-kaurene oxidase P450-4">
    <location>
        <begin position="1"/>
        <end position="500"/>
    </location>
</feature>
<feature type="transmembrane region" description="Helical" evidence="2">
    <location>
        <begin position="6"/>
        <end position="26"/>
    </location>
</feature>
<feature type="binding site" description="axial binding residue" evidence="1">
    <location>
        <position position="441"/>
    </location>
    <ligand>
        <name>heme</name>
        <dbReference type="ChEBI" id="CHEBI:30413"/>
    </ligand>
    <ligandPart>
        <name>Fe</name>
        <dbReference type="ChEBI" id="CHEBI:18248"/>
    </ligandPart>
</feature>
<feature type="glycosylation site" description="N-linked (GlcNAc...) asparagine" evidence="3">
    <location>
        <position position="240"/>
    </location>
</feature>
<feature type="glycosylation site" description="N-linked (GlcNAc...) asparagine" evidence="3">
    <location>
        <position position="475"/>
    </location>
</feature>
<organism>
    <name type="scientific">Gibberella fujikuroi (strain CBS 195.34 / IMI 58289 / NRRL A-6831)</name>
    <name type="common">Bakanae and foot rot disease fungus</name>
    <name type="synonym">Fusarium fujikuroi</name>
    <dbReference type="NCBI Taxonomy" id="1279085"/>
    <lineage>
        <taxon>Eukaryota</taxon>
        <taxon>Fungi</taxon>
        <taxon>Dikarya</taxon>
        <taxon>Ascomycota</taxon>
        <taxon>Pezizomycotina</taxon>
        <taxon>Sordariomycetes</taxon>
        <taxon>Hypocreomycetidae</taxon>
        <taxon>Hypocreales</taxon>
        <taxon>Nectriaceae</taxon>
        <taxon>Fusarium</taxon>
        <taxon>Fusarium fujikuroi species complex</taxon>
    </lineage>
</organism>
<evidence type="ECO:0000250" key="1">
    <source>
        <dbReference type="UniProtKB" id="P04798"/>
    </source>
</evidence>
<evidence type="ECO:0000255" key="2"/>
<evidence type="ECO:0000255" key="3">
    <source>
        <dbReference type="PROSITE-ProRule" id="PRU00498"/>
    </source>
</evidence>
<evidence type="ECO:0000269" key="4">
    <source>
    </source>
</evidence>
<evidence type="ECO:0000269" key="5">
    <source>
    </source>
</evidence>
<evidence type="ECO:0000269" key="6">
    <source>
    </source>
</evidence>
<evidence type="ECO:0000269" key="7">
    <source>
    </source>
</evidence>
<evidence type="ECO:0000269" key="8">
    <source>
    </source>
</evidence>
<evidence type="ECO:0000269" key="9">
    <source>
    </source>
</evidence>
<evidence type="ECO:0000269" key="10">
    <source>
    </source>
</evidence>
<evidence type="ECO:0000269" key="11">
    <source>
    </source>
</evidence>
<evidence type="ECO:0000269" key="12">
    <source>
    </source>
</evidence>
<evidence type="ECO:0000269" key="13">
    <source>
    </source>
</evidence>
<evidence type="ECO:0000303" key="14">
    <source>
    </source>
</evidence>
<evidence type="ECO:0000305" key="15"/>
<comment type="function">
    <text evidence="4 5 6 7 8 9 10 11 12 13">Ent-kaurene oxidase; part of the gene cluster that mediates the biosynthesis of gibberellins (GAs), diterpenoids that may provide a selective advantage during infection of the preferred host plant, rice (PubMed:10347043, PubMed:12750377, PubMed:15925394, PubMed:23825955, PubMed:9917370). Gibberellins (GAs) are diterpenoids and are synthesized via the mevalonate pathway (PubMed:12750377). Biosynthesis of the major metabolite GA3 (gibberellic acid) from geranylgeranyl diphosphate (GGPP) requires 13 steps (PubMed:12750377). The GGPP produced by the geranylgeranyl diphosphate synthase GGS2 is converted to ent-kaurene via ent-copalyldiphosphate in a two-step cyclization reaction performed by the bifunctional ent-copalyl diphosphate synthase/ent-kaurene synthase enzyme (CPS/KS) (PubMed:10803977, PubMed:12750377, PubMed:9745028). Ent-Kaurene is metabolized to GAs by a series of oxidation reactions catalyzed by cytochrome P450 monooxygenases (PubMed:12750377, PubMed:9917370). Cytochrome P450 monooxygenase P450-4 is an ent-kaurene oxidase that catalyzes the three oxidation steps between ent-kaurene and ent-kaurenoic acid (PubMed:11472927). The highly multifunctional cytochrome P450 monooxygenase P450-1 then catalyzes four steps involving oxidation at two carbon atoms, in the main pathway from ent-kaurenoic acid to GA14 via GA12-aldehyde as well as producing kaurenolides and fujenoic acids as by-products (PubMed:11320210). The cytochrome P450 monooxygenase P450-2 then converts GA14 to GA4 by removal of C-20 (PubMed:11943776). GA4 is further converted to GA7 by the GA4 desaturase DES via 1,2-desaturation before cytochrome P450 monooxygenase P450-3, a 13-hydroxylase, hydroxylates GA7 to GA3, the final product of the GA-biosynthetic pathway (PubMed:12750377).</text>
</comment>
<comment type="catalytic activity">
    <reaction evidence="7">
        <text>ent-kaur-16-ene + 3 reduced [NADPH--hemoprotein reductase] + 3 O2 = ent-kaur-16-en-19-oate + 3 oxidized [NADPH--hemoprotein reductase] + 4 H2O + 4 H(+)</text>
        <dbReference type="Rhea" id="RHEA:32323"/>
        <dbReference type="Rhea" id="RHEA-COMP:11964"/>
        <dbReference type="Rhea" id="RHEA-COMP:11965"/>
        <dbReference type="ChEBI" id="CHEBI:15377"/>
        <dbReference type="ChEBI" id="CHEBI:15378"/>
        <dbReference type="ChEBI" id="CHEBI:15379"/>
        <dbReference type="ChEBI" id="CHEBI:15415"/>
        <dbReference type="ChEBI" id="CHEBI:57297"/>
        <dbReference type="ChEBI" id="CHEBI:57618"/>
        <dbReference type="ChEBI" id="CHEBI:58210"/>
        <dbReference type="EC" id="1.14.14.86"/>
    </reaction>
</comment>
<comment type="cofactor">
    <cofactor evidence="1">
        <name>heme</name>
        <dbReference type="ChEBI" id="CHEBI:30413"/>
    </cofactor>
</comment>
<comment type="pathway">
    <text evidence="7">Plant hormone biosynthesis; gibberellin biosynthesis.</text>
</comment>
<comment type="subcellular location">
    <subcellularLocation>
        <location evidence="2">Membrane</location>
        <topology evidence="2">Single-pass membrane protein</topology>
    </subcellularLocation>
</comment>
<comment type="induction">
    <text evidence="7">Highly expressed under conditions of Gibberellins (GAs) production, whereas the transcript level is very low in the growth phase (PubMed:11472927).</text>
</comment>
<comment type="disruption phenotype">
    <text evidence="7">Impairs the production of gibberellins (GAs) and contains ent-kaurene as the only intermediate in the GA biosynthesis pathway (PubMed:11472927).</text>
</comment>
<comment type="similarity">
    <text evidence="15">Belongs to the cytochrome P450 family.</text>
</comment>
<protein>
    <recommendedName>
        <fullName evidence="14">Ent-kaurene oxidase P450-4</fullName>
        <ecNumber evidence="7">1.14.14.86</ecNumber>
    </recommendedName>
    <alternativeName>
        <fullName evidence="14">Cytochrome P450 monooygenase 4</fullName>
        <shortName evidence="14">P450-4</shortName>
    </alternativeName>
    <alternativeName>
        <fullName evidence="15">Gibberellin cluster kaurene oxidase</fullName>
    </alternativeName>
</protein>
<name>GA2_GIBF5</name>
<accession>S0E3D0</accession>
<reference key="1">
    <citation type="journal article" date="2013" name="PLoS Pathog.">
        <title>Deciphering the cryptic genome: genome-wide analyses of the rice pathogen Fusarium fujikuroi reveal complex regulation of secondary metabolism and novel metabolites.</title>
        <authorList>
            <person name="Wiemann P."/>
            <person name="Sieber C.M.K."/>
            <person name="von Bargen K.W."/>
            <person name="Studt L."/>
            <person name="Niehaus E.-M."/>
            <person name="Espino J.J."/>
            <person name="Huss K."/>
            <person name="Michielse C.B."/>
            <person name="Albermann S."/>
            <person name="Wagner D."/>
            <person name="Bergner S.V."/>
            <person name="Connolly L.R."/>
            <person name="Fischer A."/>
            <person name="Reuter G."/>
            <person name="Kleigrewe K."/>
            <person name="Bald T."/>
            <person name="Wingfield B.D."/>
            <person name="Ophir R."/>
            <person name="Freeman S."/>
            <person name="Hippler M."/>
            <person name="Smith K.M."/>
            <person name="Brown D.W."/>
            <person name="Proctor R.H."/>
            <person name="Muensterkoetter M."/>
            <person name="Freitag M."/>
            <person name="Humpf H.-U."/>
            <person name="Gueldener U."/>
            <person name="Tudzynski B."/>
        </authorList>
    </citation>
    <scope>NUCLEOTIDE SEQUENCE [LARGE SCALE GENOMIC DNA]</scope>
    <scope>FUNCTION</scope>
    <source>
        <strain>CBS 195.34 / IMI 58289 / NRRL A-6831</strain>
    </source>
</reference>
<reference key="2">
    <citation type="journal article" date="1998" name="Curr. Genet.">
        <title>Gibberellin biosynthesis in Gibberella fujikuroi: cloning and characterization of the copalyl diphosphate synthase gene.</title>
        <authorList>
            <person name="Tudzynski B."/>
            <person name="Kawaide H."/>
            <person name="Kamiya Y."/>
        </authorList>
    </citation>
    <scope>FUNCTION</scope>
</reference>
<reference key="3">
    <citation type="journal article" date="1998" name="Fungal Genet. Biol.">
        <title>Gibberellin biosynthetic pathway in Gibberella fujikuroi: evidence for a gene cluster.</title>
        <authorList>
            <person name="Tudzynski B."/>
            <person name="Hoelter K."/>
        </authorList>
    </citation>
    <scope>FUNCTION</scope>
</reference>
<reference key="4">
    <citation type="journal article" date="1999" name="Appl. Environ. Microbiol.">
        <title>Deletions in the gibberellin biosynthesis gene cluster of Gibberella fujikuroi by restriction enzyme-mediated integration and conventional transformation-mediated mutagenesis.</title>
        <authorList>
            <person name="Linnemannstoens P."/>
            <person name="Voss T."/>
            <person name="Hedden P."/>
            <person name="Gaskin P."/>
            <person name="Tudzynski B."/>
        </authorList>
    </citation>
    <scope>FUNCTION</scope>
</reference>
<reference key="5">
    <citation type="journal article" date="2000" name="Biosci. Biotechnol. Biochem.">
        <title>Cloning of a full-length cDNA encoding ent-kaurene synthase from Gibberella fujikuroi: functional analysis of a bifunctional diterpene cyclase.</title>
        <authorList>
            <person name="Toyomasu T."/>
            <person name="Kawaide H."/>
            <person name="Ishizaki A."/>
            <person name="Shinoda S."/>
            <person name="Otsuka M."/>
            <person name="Mitsuhashi W."/>
            <person name="Sassa T."/>
        </authorList>
    </citation>
    <scope>FUNCTION</scope>
</reference>
<reference key="6">
    <citation type="journal article" date="2001" name="Appl. Environ. Microbiol.">
        <title>The P450-4 gene of Gibberella fujikuroi encodes ent-kaurene oxidase in the gibberellin biosynthesis pathway.</title>
        <authorList>
            <person name="Tudzynski B."/>
            <person name="Hedden P."/>
            <person name="Carrera E."/>
            <person name="Gaskin P."/>
        </authorList>
    </citation>
    <scope>FUNCTION</scope>
    <scope>DISRUPTION PHENOTYPE</scope>
    <scope>CATALYTIC ACTIVITY</scope>
    <scope>INDUCTION</scope>
    <scope>PATHWAY</scope>
</reference>
<reference key="7">
    <citation type="journal article" date="2001" name="Proc. Natl. Acad. Sci. U.S.A.">
        <title>The P450-1 gene of Gibberella fujikuroi encodes a multifunctional enzyme in gibberellin biosynthesis.</title>
        <authorList>
            <person name="Rojas M.C."/>
            <person name="Hedden P."/>
            <person name="Gaskin P."/>
            <person name="Tudzynski B."/>
        </authorList>
    </citation>
    <scope>FUNCTION</scope>
</reference>
<reference key="8">
    <citation type="journal article" date="2002" name="J. Biol. Chem.">
        <title>The gibberellin 20-oxidase of Gibberella fujikuroi is a multifunctional monooxygenase.</title>
        <authorList>
            <person name="Tudzynski B."/>
            <person name="Rojas M.C."/>
            <person name="Gaskin P."/>
            <person name="Hedden P."/>
        </authorList>
    </citation>
    <scope>FUNCTION</scope>
</reference>
<reference key="9">
    <citation type="journal article" date="2003" name="J. Biol. Chem.">
        <title>Characterization of the final two genes of the gibberellin biosynthesis gene cluster of Gibberella fujikuroi: des and P450-3 encode GA4 desaturase and the 13-hydroxylase, respectively.</title>
        <authorList>
            <person name="Tudzynski B."/>
            <person name="Mihlan M."/>
            <person name="Rojas M.C."/>
            <person name="Linnemannstons P."/>
            <person name="Gaskin P."/>
            <person name="Hedden P."/>
        </authorList>
    </citation>
    <scope>FUNCTION</scope>
</reference>
<reference key="10">
    <citation type="journal article" date="2005" name="Phytochemistry">
        <title>Distribution of gibberellin biosynthetic genes and gibberellin production in the Gibberella fujikuroi species complex.</title>
        <authorList>
            <person name="Malonek S."/>
            <person name="Boemke C."/>
            <person name="Bornberg-Bauer E."/>
            <person name="Rojas M.C."/>
            <person name="Hedden P."/>
            <person name="Hopkins P."/>
            <person name="Tudzynski B."/>
        </authorList>
    </citation>
    <scope>FUNCTION</scope>
</reference>
<dbReference type="EC" id="1.14.14.86" evidence="7"/>
<dbReference type="EMBL" id="HF679027">
    <property type="protein sequence ID" value="CCT69175.1"/>
    <property type="molecule type" value="Genomic_DNA"/>
</dbReference>
<dbReference type="SMR" id="S0E3D0"/>
<dbReference type="STRING" id="1279085.S0E3D0"/>
<dbReference type="GlyCosmos" id="S0E3D0">
    <property type="glycosylation" value="2 sites, No reported glycans"/>
</dbReference>
<dbReference type="EnsemblFungi" id="CCT69175">
    <property type="protein sequence ID" value="CCT69175"/>
    <property type="gene ID" value="FFUJ_14332"/>
</dbReference>
<dbReference type="VEuPathDB" id="FungiDB:FFUJ_14332"/>
<dbReference type="HOGENOM" id="CLU_022195_0_1_1"/>
<dbReference type="UniPathway" id="UPA00390"/>
<dbReference type="Proteomes" id="UP000016800">
    <property type="component" value="Chromosome 5"/>
</dbReference>
<dbReference type="GO" id="GO:0016020">
    <property type="term" value="C:membrane"/>
    <property type="evidence" value="ECO:0007669"/>
    <property type="project" value="UniProtKB-SubCell"/>
</dbReference>
<dbReference type="GO" id="GO:0052615">
    <property type="term" value="F:ent-kaurene oxidase activity"/>
    <property type="evidence" value="ECO:0007669"/>
    <property type="project" value="UniProtKB-EC"/>
</dbReference>
<dbReference type="GO" id="GO:0020037">
    <property type="term" value="F:heme binding"/>
    <property type="evidence" value="ECO:0007669"/>
    <property type="project" value="InterPro"/>
</dbReference>
<dbReference type="GO" id="GO:0005506">
    <property type="term" value="F:iron ion binding"/>
    <property type="evidence" value="ECO:0007669"/>
    <property type="project" value="InterPro"/>
</dbReference>
<dbReference type="GO" id="GO:0009686">
    <property type="term" value="P:gibberellin biosynthetic process"/>
    <property type="evidence" value="ECO:0007669"/>
    <property type="project" value="UniProtKB-UniPathway"/>
</dbReference>
<dbReference type="GO" id="GO:0019748">
    <property type="term" value="P:secondary metabolic process"/>
    <property type="evidence" value="ECO:0007669"/>
    <property type="project" value="UniProtKB-ARBA"/>
</dbReference>
<dbReference type="CDD" id="cd11041">
    <property type="entry name" value="CYP503A1-like"/>
    <property type="match status" value="1"/>
</dbReference>
<dbReference type="Gene3D" id="1.10.630.10">
    <property type="entry name" value="Cytochrome P450"/>
    <property type="match status" value="1"/>
</dbReference>
<dbReference type="InterPro" id="IPR001128">
    <property type="entry name" value="Cyt_P450"/>
</dbReference>
<dbReference type="InterPro" id="IPR002401">
    <property type="entry name" value="Cyt_P450_E_grp-I"/>
</dbReference>
<dbReference type="InterPro" id="IPR036396">
    <property type="entry name" value="Cyt_P450_sf"/>
</dbReference>
<dbReference type="PANTHER" id="PTHR46206">
    <property type="entry name" value="CYTOCHROME P450"/>
    <property type="match status" value="1"/>
</dbReference>
<dbReference type="PANTHER" id="PTHR46206:SF6">
    <property type="entry name" value="CYTOCHROME P450 MONOOXYGENASE AN1598-RELATED"/>
    <property type="match status" value="1"/>
</dbReference>
<dbReference type="Pfam" id="PF00067">
    <property type="entry name" value="p450"/>
    <property type="match status" value="1"/>
</dbReference>
<dbReference type="PRINTS" id="PR00463">
    <property type="entry name" value="EP450I"/>
</dbReference>
<dbReference type="PRINTS" id="PR00385">
    <property type="entry name" value="P450"/>
</dbReference>
<dbReference type="SUPFAM" id="SSF48264">
    <property type="entry name" value="Cytochrome P450"/>
    <property type="match status" value="1"/>
</dbReference>
<gene>
    <name evidence="14" type="primary">P450-4</name>
    <name type="ORF">FFUJ_14332</name>
</gene>